<proteinExistence type="inferred from homology"/>
<sequence>MTQQSKETTDFGFQTVDKDEKQTMVAKVFHSVASKYDLMNDLMSFGIHRVWKRYTIEASGVRRNQRVLDLAGGTGDLTAKFSRLVGENGEVVLADINDSMLKMGREKLRDHGIVGNVSYVQANAEELPFPDDYFDCITISFGLRNVTDKAKALRSMFRVLKPGGRLLVLEFSKPVLDPLSKIYDAYSFHILPRIGQVIVNDADSYRYLTESIRMHPDQETLKGMMEEAGFDQVSYTNMTGGIVALHKGFKF</sequence>
<protein>
    <recommendedName>
        <fullName evidence="1">Ubiquinone/menaquinone biosynthesis C-methyltransferase UbiE</fullName>
        <ecNumber evidence="1">2.1.1.163</ecNumber>
        <ecNumber evidence="1">2.1.1.201</ecNumber>
    </recommendedName>
    <alternativeName>
        <fullName evidence="1">2-methoxy-6-polyprenyl-1,4-benzoquinol methylase</fullName>
    </alternativeName>
    <alternativeName>
        <fullName evidence="1">Demethylmenaquinone methyltransferase</fullName>
    </alternativeName>
</protein>
<dbReference type="EC" id="2.1.1.163" evidence="1"/>
<dbReference type="EC" id="2.1.1.201" evidence="1"/>
<dbReference type="EMBL" id="AM942759">
    <property type="protein sequence ID" value="CAR46924.1"/>
    <property type="molecule type" value="Genomic_DNA"/>
</dbReference>
<dbReference type="RefSeq" id="WP_004246121.1">
    <property type="nucleotide sequence ID" value="NC_010554.1"/>
</dbReference>
<dbReference type="SMR" id="B4EWC9"/>
<dbReference type="EnsemblBacteria" id="CAR46924">
    <property type="protein sequence ID" value="CAR46924"/>
    <property type="gene ID" value="PMI3536"/>
</dbReference>
<dbReference type="GeneID" id="6800825"/>
<dbReference type="KEGG" id="pmr:PMI3536"/>
<dbReference type="eggNOG" id="COG2226">
    <property type="taxonomic scope" value="Bacteria"/>
</dbReference>
<dbReference type="HOGENOM" id="CLU_037990_0_0_6"/>
<dbReference type="UniPathway" id="UPA00079">
    <property type="reaction ID" value="UER00169"/>
</dbReference>
<dbReference type="UniPathway" id="UPA00232"/>
<dbReference type="Proteomes" id="UP000008319">
    <property type="component" value="Chromosome"/>
</dbReference>
<dbReference type="GO" id="GO:0008425">
    <property type="term" value="F:2-methoxy-6-polyprenyl-1,4-benzoquinol methyltransferase activity"/>
    <property type="evidence" value="ECO:0007669"/>
    <property type="project" value="UniProtKB-UniRule"/>
</dbReference>
<dbReference type="GO" id="GO:0043770">
    <property type="term" value="F:demethylmenaquinone methyltransferase activity"/>
    <property type="evidence" value="ECO:0007669"/>
    <property type="project" value="UniProtKB-UniRule"/>
</dbReference>
<dbReference type="GO" id="GO:0009060">
    <property type="term" value="P:aerobic respiration"/>
    <property type="evidence" value="ECO:0007669"/>
    <property type="project" value="UniProtKB-UniRule"/>
</dbReference>
<dbReference type="GO" id="GO:0009234">
    <property type="term" value="P:menaquinone biosynthetic process"/>
    <property type="evidence" value="ECO:0007669"/>
    <property type="project" value="UniProtKB-UniRule"/>
</dbReference>
<dbReference type="GO" id="GO:0032259">
    <property type="term" value="P:methylation"/>
    <property type="evidence" value="ECO:0007669"/>
    <property type="project" value="UniProtKB-KW"/>
</dbReference>
<dbReference type="CDD" id="cd02440">
    <property type="entry name" value="AdoMet_MTases"/>
    <property type="match status" value="1"/>
</dbReference>
<dbReference type="FunFam" id="3.40.50.150:FF:000014">
    <property type="entry name" value="Ubiquinone/menaquinone biosynthesis C-methyltransferase UbiE"/>
    <property type="match status" value="1"/>
</dbReference>
<dbReference type="Gene3D" id="3.40.50.150">
    <property type="entry name" value="Vaccinia Virus protein VP39"/>
    <property type="match status" value="1"/>
</dbReference>
<dbReference type="HAMAP" id="MF_01813">
    <property type="entry name" value="MenG_UbiE_methyltr"/>
    <property type="match status" value="1"/>
</dbReference>
<dbReference type="InterPro" id="IPR029063">
    <property type="entry name" value="SAM-dependent_MTases_sf"/>
</dbReference>
<dbReference type="InterPro" id="IPR004033">
    <property type="entry name" value="UbiE/COQ5_MeTrFase"/>
</dbReference>
<dbReference type="InterPro" id="IPR023576">
    <property type="entry name" value="UbiE/COQ5_MeTrFase_CS"/>
</dbReference>
<dbReference type="NCBIfam" id="TIGR01934">
    <property type="entry name" value="MenG_MenH_UbiE"/>
    <property type="match status" value="1"/>
</dbReference>
<dbReference type="NCBIfam" id="NF001240">
    <property type="entry name" value="PRK00216.1-1"/>
    <property type="match status" value="1"/>
</dbReference>
<dbReference type="NCBIfam" id="NF001242">
    <property type="entry name" value="PRK00216.1-3"/>
    <property type="match status" value="1"/>
</dbReference>
<dbReference type="NCBIfam" id="NF001244">
    <property type="entry name" value="PRK00216.1-5"/>
    <property type="match status" value="1"/>
</dbReference>
<dbReference type="PANTHER" id="PTHR43591:SF24">
    <property type="entry name" value="2-METHOXY-6-POLYPRENYL-1,4-BENZOQUINOL METHYLASE, MITOCHONDRIAL"/>
    <property type="match status" value="1"/>
</dbReference>
<dbReference type="PANTHER" id="PTHR43591">
    <property type="entry name" value="METHYLTRANSFERASE"/>
    <property type="match status" value="1"/>
</dbReference>
<dbReference type="Pfam" id="PF01209">
    <property type="entry name" value="Ubie_methyltran"/>
    <property type="match status" value="1"/>
</dbReference>
<dbReference type="SUPFAM" id="SSF53335">
    <property type="entry name" value="S-adenosyl-L-methionine-dependent methyltransferases"/>
    <property type="match status" value="1"/>
</dbReference>
<dbReference type="PROSITE" id="PS51608">
    <property type="entry name" value="SAM_MT_UBIE"/>
    <property type="match status" value="1"/>
</dbReference>
<dbReference type="PROSITE" id="PS01183">
    <property type="entry name" value="UBIE_1"/>
    <property type="match status" value="1"/>
</dbReference>
<dbReference type="PROSITE" id="PS01184">
    <property type="entry name" value="UBIE_2"/>
    <property type="match status" value="1"/>
</dbReference>
<comment type="function">
    <text evidence="1">Methyltransferase required for the conversion of demethylmenaquinol (DMKH2) to menaquinol (MKH2) and the conversion of 2-polyprenyl-6-methoxy-1,4-benzoquinol (DDMQH2) to 2-polyprenyl-3-methyl-6-methoxy-1,4-benzoquinol (DMQH2).</text>
</comment>
<comment type="catalytic activity">
    <reaction evidence="1">
        <text>a 2-demethylmenaquinol + S-adenosyl-L-methionine = a menaquinol + S-adenosyl-L-homocysteine + H(+)</text>
        <dbReference type="Rhea" id="RHEA:42640"/>
        <dbReference type="Rhea" id="RHEA-COMP:9539"/>
        <dbReference type="Rhea" id="RHEA-COMP:9563"/>
        <dbReference type="ChEBI" id="CHEBI:15378"/>
        <dbReference type="ChEBI" id="CHEBI:18151"/>
        <dbReference type="ChEBI" id="CHEBI:55437"/>
        <dbReference type="ChEBI" id="CHEBI:57856"/>
        <dbReference type="ChEBI" id="CHEBI:59789"/>
        <dbReference type="EC" id="2.1.1.163"/>
    </reaction>
</comment>
<comment type="catalytic activity">
    <reaction evidence="1">
        <text>a 2-methoxy-6-(all-trans-polyprenyl)benzene-1,4-diol + S-adenosyl-L-methionine = a 5-methoxy-2-methyl-3-(all-trans-polyprenyl)benzene-1,4-diol + S-adenosyl-L-homocysteine + H(+)</text>
        <dbReference type="Rhea" id="RHEA:28286"/>
        <dbReference type="Rhea" id="RHEA-COMP:10858"/>
        <dbReference type="Rhea" id="RHEA-COMP:10859"/>
        <dbReference type="ChEBI" id="CHEBI:15378"/>
        <dbReference type="ChEBI" id="CHEBI:57856"/>
        <dbReference type="ChEBI" id="CHEBI:59789"/>
        <dbReference type="ChEBI" id="CHEBI:84166"/>
        <dbReference type="ChEBI" id="CHEBI:84167"/>
        <dbReference type="EC" id="2.1.1.201"/>
    </reaction>
</comment>
<comment type="pathway">
    <text evidence="1">Quinol/quinone metabolism; menaquinone biosynthesis; menaquinol from 1,4-dihydroxy-2-naphthoate: step 2/2.</text>
</comment>
<comment type="pathway">
    <text evidence="1">Cofactor biosynthesis; ubiquinone biosynthesis.</text>
</comment>
<comment type="similarity">
    <text evidence="1">Belongs to the class I-like SAM-binding methyltransferase superfamily. MenG/UbiE family.</text>
</comment>
<gene>
    <name evidence="1" type="primary">ubiE</name>
    <name type="ordered locus">PMI3536</name>
</gene>
<feature type="chain" id="PRO_1000187787" description="Ubiquinone/menaquinone biosynthesis C-methyltransferase UbiE">
    <location>
        <begin position="1"/>
        <end position="251"/>
    </location>
</feature>
<feature type="binding site" evidence="1">
    <location>
        <position position="74"/>
    </location>
    <ligand>
        <name>S-adenosyl-L-methionine</name>
        <dbReference type="ChEBI" id="CHEBI:59789"/>
    </ligand>
</feature>
<feature type="binding site" evidence="1">
    <location>
        <position position="95"/>
    </location>
    <ligand>
        <name>S-adenosyl-L-methionine</name>
        <dbReference type="ChEBI" id="CHEBI:59789"/>
    </ligand>
</feature>
<feature type="binding site" evidence="1">
    <location>
        <begin position="123"/>
        <end position="124"/>
    </location>
    <ligand>
        <name>S-adenosyl-L-methionine</name>
        <dbReference type="ChEBI" id="CHEBI:59789"/>
    </ligand>
</feature>
<feature type="binding site" evidence="1">
    <location>
        <position position="140"/>
    </location>
    <ligand>
        <name>S-adenosyl-L-methionine</name>
        <dbReference type="ChEBI" id="CHEBI:59789"/>
    </ligand>
</feature>
<organism>
    <name type="scientific">Proteus mirabilis (strain HI4320)</name>
    <dbReference type="NCBI Taxonomy" id="529507"/>
    <lineage>
        <taxon>Bacteria</taxon>
        <taxon>Pseudomonadati</taxon>
        <taxon>Pseudomonadota</taxon>
        <taxon>Gammaproteobacteria</taxon>
        <taxon>Enterobacterales</taxon>
        <taxon>Morganellaceae</taxon>
        <taxon>Proteus</taxon>
    </lineage>
</organism>
<accession>B4EWC9</accession>
<name>UBIE_PROMH</name>
<reference key="1">
    <citation type="journal article" date="2008" name="J. Bacteriol.">
        <title>Complete genome sequence of uropathogenic Proteus mirabilis, a master of both adherence and motility.</title>
        <authorList>
            <person name="Pearson M.M."/>
            <person name="Sebaihia M."/>
            <person name="Churcher C."/>
            <person name="Quail M.A."/>
            <person name="Seshasayee A.S."/>
            <person name="Luscombe N.M."/>
            <person name="Abdellah Z."/>
            <person name="Arrosmith C."/>
            <person name="Atkin B."/>
            <person name="Chillingworth T."/>
            <person name="Hauser H."/>
            <person name="Jagels K."/>
            <person name="Moule S."/>
            <person name="Mungall K."/>
            <person name="Norbertczak H."/>
            <person name="Rabbinowitsch E."/>
            <person name="Walker D."/>
            <person name="Whithead S."/>
            <person name="Thomson N.R."/>
            <person name="Rather P.N."/>
            <person name="Parkhill J."/>
            <person name="Mobley H.L.T."/>
        </authorList>
    </citation>
    <scope>NUCLEOTIDE SEQUENCE [LARGE SCALE GENOMIC DNA]</scope>
    <source>
        <strain>HI4320</strain>
    </source>
</reference>
<keyword id="KW-0474">Menaquinone biosynthesis</keyword>
<keyword id="KW-0489">Methyltransferase</keyword>
<keyword id="KW-1185">Reference proteome</keyword>
<keyword id="KW-0949">S-adenosyl-L-methionine</keyword>
<keyword id="KW-0808">Transferase</keyword>
<keyword id="KW-0831">Ubiquinone biosynthesis</keyword>
<evidence type="ECO:0000255" key="1">
    <source>
        <dbReference type="HAMAP-Rule" id="MF_01813"/>
    </source>
</evidence>